<reference key="1">
    <citation type="journal article" date="2005" name="Arch. Microbiol.">
        <title>The genome sequence of an anaerobic aromatic-degrading denitrifying bacterium, strain EbN1.</title>
        <authorList>
            <person name="Rabus R."/>
            <person name="Kube M."/>
            <person name="Heider J."/>
            <person name="Beck A."/>
            <person name="Heitmann K."/>
            <person name="Widdel F."/>
            <person name="Reinhardt R."/>
        </authorList>
    </citation>
    <scope>NUCLEOTIDE SEQUENCE [LARGE SCALE GENOMIC DNA]</scope>
    <source>
        <strain>DSM 19018 / LMG 30748 / EbN1</strain>
    </source>
</reference>
<gene>
    <name evidence="1" type="primary">mnmG</name>
    <name evidence="1" type="synonym">gidA</name>
    <name type="ordered locus">AZOSEA16420</name>
    <name type="ORF">ebA2915</name>
</gene>
<name>MNMG_AROAE</name>
<accession>Q5P4J6</accession>
<feature type="chain" id="PRO_0000117047" description="tRNA uridine 5-carboxymethylaminomethyl modification enzyme MnmG">
    <location>
        <begin position="1"/>
        <end position="652"/>
    </location>
</feature>
<feature type="region of interest" description="Disordered" evidence="2">
    <location>
        <begin position="631"/>
        <end position="652"/>
    </location>
</feature>
<feature type="compositionally biased region" description="Low complexity" evidence="2">
    <location>
        <begin position="631"/>
        <end position="640"/>
    </location>
</feature>
<feature type="binding site" evidence="1">
    <location>
        <begin position="13"/>
        <end position="18"/>
    </location>
    <ligand>
        <name>FAD</name>
        <dbReference type="ChEBI" id="CHEBI:57692"/>
    </ligand>
</feature>
<feature type="binding site" evidence="1">
    <location>
        <begin position="273"/>
        <end position="287"/>
    </location>
    <ligand>
        <name>NAD(+)</name>
        <dbReference type="ChEBI" id="CHEBI:57540"/>
    </ligand>
</feature>
<comment type="function">
    <text evidence="1">NAD-binding protein involved in the addition of a carboxymethylaminomethyl (cmnm) group at the wobble position (U34) of certain tRNAs, forming tRNA-cmnm(5)s(2)U34.</text>
</comment>
<comment type="cofactor">
    <cofactor evidence="1">
        <name>FAD</name>
        <dbReference type="ChEBI" id="CHEBI:57692"/>
    </cofactor>
</comment>
<comment type="subunit">
    <text evidence="1">Homodimer. Heterotetramer of two MnmE and two MnmG subunits.</text>
</comment>
<comment type="subcellular location">
    <subcellularLocation>
        <location evidence="1">Cytoplasm</location>
    </subcellularLocation>
</comment>
<comment type="similarity">
    <text evidence="1">Belongs to the MnmG family.</text>
</comment>
<proteinExistence type="inferred from homology"/>
<evidence type="ECO:0000255" key="1">
    <source>
        <dbReference type="HAMAP-Rule" id="MF_00129"/>
    </source>
</evidence>
<evidence type="ECO:0000256" key="2">
    <source>
        <dbReference type="SAM" id="MobiDB-lite"/>
    </source>
</evidence>
<organism>
    <name type="scientific">Aromatoleum aromaticum (strain DSM 19018 / LMG 30748 / EbN1)</name>
    <name type="common">Azoarcus sp. (strain EbN1)</name>
    <dbReference type="NCBI Taxonomy" id="76114"/>
    <lineage>
        <taxon>Bacteria</taxon>
        <taxon>Pseudomonadati</taxon>
        <taxon>Pseudomonadota</taxon>
        <taxon>Betaproteobacteria</taxon>
        <taxon>Rhodocyclales</taxon>
        <taxon>Rhodocyclaceae</taxon>
        <taxon>Aromatoleum</taxon>
    </lineage>
</organism>
<dbReference type="EMBL" id="CR555306">
    <property type="protein sequence ID" value="CAI07767.1"/>
    <property type="molecule type" value="Genomic_DNA"/>
</dbReference>
<dbReference type="RefSeq" id="WP_011237481.1">
    <property type="nucleotide sequence ID" value="NC_006513.1"/>
</dbReference>
<dbReference type="SMR" id="Q5P4J6"/>
<dbReference type="STRING" id="76114.ebA2915"/>
<dbReference type="KEGG" id="eba:ebA2915"/>
<dbReference type="eggNOG" id="COG0445">
    <property type="taxonomic scope" value="Bacteria"/>
</dbReference>
<dbReference type="HOGENOM" id="CLU_007831_2_2_4"/>
<dbReference type="OrthoDB" id="9815560at2"/>
<dbReference type="Proteomes" id="UP000006552">
    <property type="component" value="Chromosome"/>
</dbReference>
<dbReference type="GO" id="GO:0005829">
    <property type="term" value="C:cytosol"/>
    <property type="evidence" value="ECO:0007669"/>
    <property type="project" value="TreeGrafter"/>
</dbReference>
<dbReference type="GO" id="GO:0050660">
    <property type="term" value="F:flavin adenine dinucleotide binding"/>
    <property type="evidence" value="ECO:0007669"/>
    <property type="project" value="UniProtKB-UniRule"/>
</dbReference>
<dbReference type="GO" id="GO:0030488">
    <property type="term" value="P:tRNA methylation"/>
    <property type="evidence" value="ECO:0007669"/>
    <property type="project" value="TreeGrafter"/>
</dbReference>
<dbReference type="GO" id="GO:0002098">
    <property type="term" value="P:tRNA wobble uridine modification"/>
    <property type="evidence" value="ECO:0007669"/>
    <property type="project" value="InterPro"/>
</dbReference>
<dbReference type="FunFam" id="1.10.10.1800:FF:000001">
    <property type="entry name" value="tRNA uridine 5-carboxymethylaminomethyl modification enzyme MnmG"/>
    <property type="match status" value="1"/>
</dbReference>
<dbReference type="FunFam" id="1.10.150.570:FF:000001">
    <property type="entry name" value="tRNA uridine 5-carboxymethylaminomethyl modification enzyme MnmG"/>
    <property type="match status" value="1"/>
</dbReference>
<dbReference type="FunFam" id="3.50.50.60:FF:000002">
    <property type="entry name" value="tRNA uridine 5-carboxymethylaminomethyl modification enzyme MnmG"/>
    <property type="match status" value="1"/>
</dbReference>
<dbReference type="FunFam" id="3.50.50.60:FF:000010">
    <property type="entry name" value="tRNA uridine 5-carboxymethylaminomethyl modification enzyme MnmG"/>
    <property type="match status" value="1"/>
</dbReference>
<dbReference type="Gene3D" id="3.50.50.60">
    <property type="entry name" value="FAD/NAD(P)-binding domain"/>
    <property type="match status" value="2"/>
</dbReference>
<dbReference type="Gene3D" id="1.10.150.570">
    <property type="entry name" value="GidA associated domain, C-terminal subdomain"/>
    <property type="match status" value="1"/>
</dbReference>
<dbReference type="Gene3D" id="1.10.10.1800">
    <property type="entry name" value="tRNA uridine 5-carboxymethylaminomethyl modification enzyme MnmG/GidA"/>
    <property type="match status" value="1"/>
</dbReference>
<dbReference type="HAMAP" id="MF_00129">
    <property type="entry name" value="MnmG_GidA"/>
    <property type="match status" value="1"/>
</dbReference>
<dbReference type="InterPro" id="IPR036188">
    <property type="entry name" value="FAD/NAD-bd_sf"/>
</dbReference>
<dbReference type="InterPro" id="IPR049312">
    <property type="entry name" value="GIDA_C_N"/>
</dbReference>
<dbReference type="InterPro" id="IPR004416">
    <property type="entry name" value="MnmG"/>
</dbReference>
<dbReference type="InterPro" id="IPR002218">
    <property type="entry name" value="MnmG-rel"/>
</dbReference>
<dbReference type="InterPro" id="IPR020595">
    <property type="entry name" value="MnmG-rel_CS"/>
</dbReference>
<dbReference type="InterPro" id="IPR026904">
    <property type="entry name" value="MnmG_C"/>
</dbReference>
<dbReference type="InterPro" id="IPR047001">
    <property type="entry name" value="MnmG_C_subdom"/>
</dbReference>
<dbReference type="InterPro" id="IPR044920">
    <property type="entry name" value="MnmG_C_subdom_sf"/>
</dbReference>
<dbReference type="InterPro" id="IPR040131">
    <property type="entry name" value="MnmG_N"/>
</dbReference>
<dbReference type="NCBIfam" id="TIGR00136">
    <property type="entry name" value="mnmG_gidA"/>
    <property type="match status" value="1"/>
</dbReference>
<dbReference type="PANTHER" id="PTHR11806">
    <property type="entry name" value="GLUCOSE INHIBITED DIVISION PROTEIN A"/>
    <property type="match status" value="1"/>
</dbReference>
<dbReference type="PANTHER" id="PTHR11806:SF0">
    <property type="entry name" value="PROTEIN MTO1 HOMOLOG, MITOCHONDRIAL"/>
    <property type="match status" value="1"/>
</dbReference>
<dbReference type="Pfam" id="PF01134">
    <property type="entry name" value="GIDA"/>
    <property type="match status" value="1"/>
</dbReference>
<dbReference type="Pfam" id="PF21680">
    <property type="entry name" value="GIDA_C_1st"/>
    <property type="match status" value="1"/>
</dbReference>
<dbReference type="Pfam" id="PF13932">
    <property type="entry name" value="SAM_GIDA_C"/>
    <property type="match status" value="1"/>
</dbReference>
<dbReference type="SMART" id="SM01228">
    <property type="entry name" value="GIDA_assoc_3"/>
    <property type="match status" value="1"/>
</dbReference>
<dbReference type="SUPFAM" id="SSF51905">
    <property type="entry name" value="FAD/NAD(P)-binding domain"/>
    <property type="match status" value="1"/>
</dbReference>
<dbReference type="PROSITE" id="PS01280">
    <property type="entry name" value="GIDA_1"/>
    <property type="match status" value="1"/>
</dbReference>
<dbReference type="PROSITE" id="PS01281">
    <property type="entry name" value="GIDA_2"/>
    <property type="match status" value="1"/>
</dbReference>
<keyword id="KW-0963">Cytoplasm</keyword>
<keyword id="KW-0274">FAD</keyword>
<keyword id="KW-0285">Flavoprotein</keyword>
<keyword id="KW-0520">NAD</keyword>
<keyword id="KW-1185">Reference proteome</keyword>
<keyword id="KW-0819">tRNA processing</keyword>
<sequence length="652" mass="71051">MLYPSRFDVIVVGGGHAGTEAALAAARIGAKTLLLTHNIETLGQMSCNPSIGGIGKGHLVKEVDALGGAMAAATDEGGIQFRILNASKGPAVRATRAQADRVLYKAAIRHRLENQPNLWLFQQAVDDLTVSGDRVTGVVTQIGLAFEAPAVVLTAGTFLNGLIHVGLDNYSAGRAGDPPAISLGARLKELALPQGRLKTGTPPRLDARTIDFSVMQEQPGDDPVPVFSFLGRASQHPQQLPCWITHTNERTHDIIRANLDRSPMYSGVIEGVGPRYCPSIEDKIHRFADKTSHNIFLEPEGLTTNEIYPNGISTSLPFDVQLAVVRSIRGLENAFILRPGYAIEYDYFDPRNLKSSLETKSFHGLFFAGQINGTTGYEEAAAQGLLAGANAALQVAGREAWCPRRDEAYLGVLVDDLITRGVSEPYRMFTSRAEYRLSLREDNADLRLTEKGRELGLVDDVRWAAFCEKRDAIERETARLRAAWAHPARVPAVDAERVVGKALEREYRFFELLRRPNTRYAELMSLPGAPENPATDPQVIEQIEIAAKYQGYIDRQQGEVAKQLQAESTLLPADLDYSRVRGLSKEVQQKLNLHKPGTLGQAGRIQGVTPAAISLLMVWLKRRDLAAAAGADDTGLPATDGEGEAATRMRGV</sequence>
<protein>
    <recommendedName>
        <fullName evidence="1">tRNA uridine 5-carboxymethylaminomethyl modification enzyme MnmG</fullName>
    </recommendedName>
    <alternativeName>
        <fullName evidence="1">Glucose-inhibited division protein A</fullName>
    </alternativeName>
</protein>